<evidence type="ECO:0000256" key="1">
    <source>
        <dbReference type="SAM" id="MobiDB-lite"/>
    </source>
</evidence>
<evidence type="ECO:0000303" key="2">
    <source>
    </source>
</evidence>
<evidence type="ECO:0000303" key="3">
    <source>
    </source>
</evidence>
<evidence type="ECO:0000305" key="4"/>
<evidence type="ECO:0007744" key="5">
    <source>
    </source>
</evidence>
<evidence type="ECO:0007744" key="6">
    <source>
    </source>
</evidence>
<evidence type="ECO:0007744" key="7">
    <source>
    </source>
</evidence>
<evidence type="ECO:0007744" key="8">
    <source>
    </source>
</evidence>
<evidence type="ECO:0007744" key="9">
    <source>
    </source>
</evidence>
<evidence type="ECO:0007744" key="10">
    <source>
    </source>
</evidence>
<proteinExistence type="evidence at protein level"/>
<protein>
    <recommendedName>
        <fullName>Multiple myeloma tumor-associated protein 2</fullName>
        <shortName>hMMTAG2</shortName>
    </recommendedName>
</protein>
<sequence>MFGSSRGGVRGGQDQFNWEDVKTDKQRENYLGNSLMAPVGRWQKGRDLTWYAKGRAPCAGPSREEELAAVREAEREALLAALGYKNVKKQPTGLSKEDFAEVCKREGGDPEEKGVDRLLGLGSASGSVGRVAMSREDKEAAKLGLSVFTHHRVESGGPGTSAASARRKPRAEDQTESSCESHRKSKKEKKKKKKRKHKKEKKKKDKEHRRPAEATSSPTSPERPRHHHHDSDSNSPCCKRRKRGHSGDRRSPSRRWHDRGSEA</sequence>
<organism>
    <name type="scientific">Homo sapiens</name>
    <name type="common">Human</name>
    <dbReference type="NCBI Taxonomy" id="9606"/>
    <lineage>
        <taxon>Eukaryota</taxon>
        <taxon>Metazoa</taxon>
        <taxon>Chordata</taxon>
        <taxon>Craniata</taxon>
        <taxon>Vertebrata</taxon>
        <taxon>Euteleostomi</taxon>
        <taxon>Mammalia</taxon>
        <taxon>Eutheria</taxon>
        <taxon>Euarchontoglires</taxon>
        <taxon>Primates</taxon>
        <taxon>Haplorrhini</taxon>
        <taxon>Catarrhini</taxon>
        <taxon>Hominidae</taxon>
        <taxon>Homo</taxon>
    </lineage>
</organism>
<accession>Q9BU76</accession>
<accession>Q6P5Y0</accession>
<accession>Q6ZTZ6</accession>
<accession>Q6ZWA6</accession>
<accession>Q8IZH3</accession>
<gene>
    <name type="primary">MMTAG2</name>
    <name type="synonym">C1orf35</name>
</gene>
<reference key="1">
    <citation type="journal article" date="2003" name="Sheng Wu Hua Xue Yu Sheng Wu Wu Li Xue Bao">
        <title>Cloning and sequence analysis of tumor-associated gene hMMTAG2 from human multiple myeloma cell line ARH-77.</title>
        <authorList>
            <person name="Tian J.Y."/>
            <person name="Hu W.X."/>
            <person name="Tian E.M."/>
            <person name="Shi Y.W."/>
            <person name="Shen Q.X."/>
            <person name="Tang L.J."/>
            <person name="Jiang Y.S."/>
        </authorList>
    </citation>
    <scope>NUCLEOTIDE SEQUENCE [MRNA] (ISOFORM 1)</scope>
    <source>
        <tissue>Myeloma</tissue>
    </source>
</reference>
<reference key="2">
    <citation type="journal article" date="2004" name="Nat. Genet.">
        <title>Complete sequencing and characterization of 21,243 full-length human cDNAs.</title>
        <authorList>
            <person name="Ota T."/>
            <person name="Suzuki Y."/>
            <person name="Nishikawa T."/>
            <person name="Otsuki T."/>
            <person name="Sugiyama T."/>
            <person name="Irie R."/>
            <person name="Wakamatsu A."/>
            <person name="Hayashi K."/>
            <person name="Sato H."/>
            <person name="Nagai K."/>
            <person name="Kimura K."/>
            <person name="Makita H."/>
            <person name="Sekine M."/>
            <person name="Obayashi M."/>
            <person name="Nishi T."/>
            <person name="Shibahara T."/>
            <person name="Tanaka T."/>
            <person name="Ishii S."/>
            <person name="Yamamoto J."/>
            <person name="Saito K."/>
            <person name="Kawai Y."/>
            <person name="Isono Y."/>
            <person name="Nakamura Y."/>
            <person name="Nagahari K."/>
            <person name="Murakami K."/>
            <person name="Yasuda T."/>
            <person name="Iwayanagi T."/>
            <person name="Wagatsuma M."/>
            <person name="Shiratori A."/>
            <person name="Sudo H."/>
            <person name="Hosoiri T."/>
            <person name="Kaku Y."/>
            <person name="Kodaira H."/>
            <person name="Kondo H."/>
            <person name="Sugawara M."/>
            <person name="Takahashi M."/>
            <person name="Kanda K."/>
            <person name="Yokoi T."/>
            <person name="Furuya T."/>
            <person name="Kikkawa E."/>
            <person name="Omura Y."/>
            <person name="Abe K."/>
            <person name="Kamihara K."/>
            <person name="Katsuta N."/>
            <person name="Sato K."/>
            <person name="Tanikawa M."/>
            <person name="Yamazaki M."/>
            <person name="Ninomiya K."/>
            <person name="Ishibashi T."/>
            <person name="Yamashita H."/>
            <person name="Murakawa K."/>
            <person name="Fujimori K."/>
            <person name="Tanai H."/>
            <person name="Kimata M."/>
            <person name="Watanabe M."/>
            <person name="Hiraoka S."/>
            <person name="Chiba Y."/>
            <person name="Ishida S."/>
            <person name="Ono Y."/>
            <person name="Takiguchi S."/>
            <person name="Watanabe S."/>
            <person name="Yosida M."/>
            <person name="Hotuta T."/>
            <person name="Kusano J."/>
            <person name="Kanehori K."/>
            <person name="Takahashi-Fujii A."/>
            <person name="Hara H."/>
            <person name="Tanase T.-O."/>
            <person name="Nomura Y."/>
            <person name="Togiya S."/>
            <person name="Komai F."/>
            <person name="Hara R."/>
            <person name="Takeuchi K."/>
            <person name="Arita M."/>
            <person name="Imose N."/>
            <person name="Musashino K."/>
            <person name="Yuuki H."/>
            <person name="Oshima A."/>
            <person name="Sasaki N."/>
            <person name="Aotsuka S."/>
            <person name="Yoshikawa Y."/>
            <person name="Matsunawa H."/>
            <person name="Ichihara T."/>
            <person name="Shiohata N."/>
            <person name="Sano S."/>
            <person name="Moriya S."/>
            <person name="Momiyama H."/>
            <person name="Satoh N."/>
            <person name="Takami S."/>
            <person name="Terashima Y."/>
            <person name="Suzuki O."/>
            <person name="Nakagawa S."/>
            <person name="Senoh A."/>
            <person name="Mizoguchi H."/>
            <person name="Goto Y."/>
            <person name="Shimizu F."/>
            <person name="Wakebe H."/>
            <person name="Hishigaki H."/>
            <person name="Watanabe T."/>
            <person name="Sugiyama A."/>
            <person name="Takemoto M."/>
            <person name="Kawakami B."/>
            <person name="Yamazaki M."/>
            <person name="Watanabe K."/>
            <person name="Kumagai A."/>
            <person name="Itakura S."/>
            <person name="Fukuzumi Y."/>
            <person name="Fujimori Y."/>
            <person name="Komiyama M."/>
            <person name="Tashiro H."/>
            <person name="Tanigami A."/>
            <person name="Fujiwara T."/>
            <person name="Ono T."/>
            <person name="Yamada K."/>
            <person name="Fujii Y."/>
            <person name="Ozaki K."/>
            <person name="Hirao M."/>
            <person name="Ohmori Y."/>
            <person name="Kawabata A."/>
            <person name="Hikiji T."/>
            <person name="Kobatake N."/>
            <person name="Inagaki H."/>
            <person name="Ikema Y."/>
            <person name="Okamoto S."/>
            <person name="Okitani R."/>
            <person name="Kawakami T."/>
            <person name="Noguchi S."/>
            <person name="Itoh T."/>
            <person name="Shigeta K."/>
            <person name="Senba T."/>
            <person name="Matsumura K."/>
            <person name="Nakajima Y."/>
            <person name="Mizuno T."/>
            <person name="Morinaga M."/>
            <person name="Sasaki M."/>
            <person name="Togashi T."/>
            <person name="Oyama M."/>
            <person name="Hata H."/>
            <person name="Watanabe M."/>
            <person name="Komatsu T."/>
            <person name="Mizushima-Sugano J."/>
            <person name="Satoh T."/>
            <person name="Shirai Y."/>
            <person name="Takahashi Y."/>
            <person name="Nakagawa K."/>
            <person name="Okumura K."/>
            <person name="Nagase T."/>
            <person name="Nomura N."/>
            <person name="Kikuchi H."/>
            <person name="Masuho Y."/>
            <person name="Yamashita R."/>
            <person name="Nakai K."/>
            <person name="Yada T."/>
            <person name="Nakamura Y."/>
            <person name="Ohara O."/>
            <person name="Isogai T."/>
            <person name="Sugano S."/>
        </authorList>
    </citation>
    <scope>NUCLEOTIDE SEQUENCE [LARGE SCALE MRNA] (ISOFORMS 1; 2 AND 4)</scope>
    <source>
        <tissue>Caudate nucleus</tissue>
    </source>
</reference>
<reference key="3">
    <citation type="journal article" date="2006" name="Nature">
        <title>The DNA sequence and biological annotation of human chromosome 1.</title>
        <authorList>
            <person name="Gregory S.G."/>
            <person name="Barlow K.F."/>
            <person name="McLay K.E."/>
            <person name="Kaul R."/>
            <person name="Swarbreck D."/>
            <person name="Dunham A."/>
            <person name="Scott C.E."/>
            <person name="Howe K.L."/>
            <person name="Woodfine K."/>
            <person name="Spencer C.C.A."/>
            <person name="Jones M.C."/>
            <person name="Gillson C."/>
            <person name="Searle S."/>
            <person name="Zhou Y."/>
            <person name="Kokocinski F."/>
            <person name="McDonald L."/>
            <person name="Evans R."/>
            <person name="Phillips K."/>
            <person name="Atkinson A."/>
            <person name="Cooper R."/>
            <person name="Jones C."/>
            <person name="Hall R.E."/>
            <person name="Andrews T.D."/>
            <person name="Lloyd C."/>
            <person name="Ainscough R."/>
            <person name="Almeida J.P."/>
            <person name="Ambrose K.D."/>
            <person name="Anderson F."/>
            <person name="Andrew R.W."/>
            <person name="Ashwell R.I.S."/>
            <person name="Aubin K."/>
            <person name="Babbage A.K."/>
            <person name="Bagguley C.L."/>
            <person name="Bailey J."/>
            <person name="Beasley H."/>
            <person name="Bethel G."/>
            <person name="Bird C.P."/>
            <person name="Bray-Allen S."/>
            <person name="Brown J.Y."/>
            <person name="Brown A.J."/>
            <person name="Buckley D."/>
            <person name="Burton J."/>
            <person name="Bye J."/>
            <person name="Carder C."/>
            <person name="Chapman J.C."/>
            <person name="Clark S.Y."/>
            <person name="Clarke G."/>
            <person name="Clee C."/>
            <person name="Cobley V."/>
            <person name="Collier R.E."/>
            <person name="Corby N."/>
            <person name="Coville G.J."/>
            <person name="Davies J."/>
            <person name="Deadman R."/>
            <person name="Dunn M."/>
            <person name="Earthrowl M."/>
            <person name="Ellington A.G."/>
            <person name="Errington H."/>
            <person name="Frankish A."/>
            <person name="Frankland J."/>
            <person name="French L."/>
            <person name="Garner P."/>
            <person name="Garnett J."/>
            <person name="Gay L."/>
            <person name="Ghori M.R.J."/>
            <person name="Gibson R."/>
            <person name="Gilby L.M."/>
            <person name="Gillett W."/>
            <person name="Glithero R.J."/>
            <person name="Grafham D.V."/>
            <person name="Griffiths C."/>
            <person name="Griffiths-Jones S."/>
            <person name="Grocock R."/>
            <person name="Hammond S."/>
            <person name="Harrison E.S.I."/>
            <person name="Hart E."/>
            <person name="Haugen E."/>
            <person name="Heath P.D."/>
            <person name="Holmes S."/>
            <person name="Holt K."/>
            <person name="Howden P.J."/>
            <person name="Hunt A.R."/>
            <person name="Hunt S.E."/>
            <person name="Hunter G."/>
            <person name="Isherwood J."/>
            <person name="James R."/>
            <person name="Johnson C."/>
            <person name="Johnson D."/>
            <person name="Joy A."/>
            <person name="Kay M."/>
            <person name="Kershaw J.K."/>
            <person name="Kibukawa M."/>
            <person name="Kimberley A.M."/>
            <person name="King A."/>
            <person name="Knights A.J."/>
            <person name="Lad H."/>
            <person name="Laird G."/>
            <person name="Lawlor S."/>
            <person name="Leongamornlert D.A."/>
            <person name="Lloyd D.M."/>
            <person name="Loveland J."/>
            <person name="Lovell J."/>
            <person name="Lush M.J."/>
            <person name="Lyne R."/>
            <person name="Martin S."/>
            <person name="Mashreghi-Mohammadi M."/>
            <person name="Matthews L."/>
            <person name="Matthews N.S.W."/>
            <person name="McLaren S."/>
            <person name="Milne S."/>
            <person name="Mistry S."/>
            <person name="Moore M.J.F."/>
            <person name="Nickerson T."/>
            <person name="O'Dell C.N."/>
            <person name="Oliver K."/>
            <person name="Palmeiri A."/>
            <person name="Palmer S.A."/>
            <person name="Parker A."/>
            <person name="Patel D."/>
            <person name="Pearce A.V."/>
            <person name="Peck A.I."/>
            <person name="Pelan S."/>
            <person name="Phelps K."/>
            <person name="Phillimore B.J."/>
            <person name="Plumb R."/>
            <person name="Rajan J."/>
            <person name="Raymond C."/>
            <person name="Rouse G."/>
            <person name="Saenphimmachak C."/>
            <person name="Sehra H.K."/>
            <person name="Sheridan E."/>
            <person name="Shownkeen R."/>
            <person name="Sims S."/>
            <person name="Skuce C.D."/>
            <person name="Smith M."/>
            <person name="Steward C."/>
            <person name="Subramanian S."/>
            <person name="Sycamore N."/>
            <person name="Tracey A."/>
            <person name="Tromans A."/>
            <person name="Van Helmond Z."/>
            <person name="Wall M."/>
            <person name="Wallis J.M."/>
            <person name="White S."/>
            <person name="Whitehead S.L."/>
            <person name="Wilkinson J.E."/>
            <person name="Willey D.L."/>
            <person name="Williams H."/>
            <person name="Wilming L."/>
            <person name="Wray P.W."/>
            <person name="Wu Z."/>
            <person name="Coulson A."/>
            <person name="Vaudin M."/>
            <person name="Sulston J.E."/>
            <person name="Durbin R.M."/>
            <person name="Hubbard T."/>
            <person name="Wooster R."/>
            <person name="Dunham I."/>
            <person name="Carter N.P."/>
            <person name="McVean G."/>
            <person name="Ross M.T."/>
            <person name="Harrow J."/>
            <person name="Olson M.V."/>
            <person name="Beck S."/>
            <person name="Rogers J."/>
            <person name="Bentley D.R."/>
        </authorList>
    </citation>
    <scope>NUCLEOTIDE SEQUENCE [LARGE SCALE GENOMIC DNA]</scope>
</reference>
<reference key="4">
    <citation type="journal article" date="2004" name="Genome Res.">
        <title>The status, quality, and expansion of the NIH full-length cDNA project: the Mammalian Gene Collection (MGC).</title>
        <authorList>
            <consortium name="The MGC Project Team"/>
        </authorList>
    </citation>
    <scope>NUCLEOTIDE SEQUENCE [LARGE SCALE MRNA] (ISOFORMS 1 AND 3)</scope>
    <source>
        <tissue>Blood</tissue>
        <tissue>Lymph</tissue>
    </source>
</reference>
<reference key="5">
    <citation type="journal article" date="2006" name="Cell">
        <title>Global, in vivo, and site-specific phosphorylation dynamics in signaling networks.</title>
        <authorList>
            <person name="Olsen J.V."/>
            <person name="Blagoev B."/>
            <person name="Gnad F."/>
            <person name="Macek B."/>
            <person name="Kumar C."/>
            <person name="Mortensen P."/>
            <person name="Mann M."/>
        </authorList>
    </citation>
    <scope>IDENTIFICATION BY MASS SPECTROMETRY [LARGE SCALE ANALYSIS]</scope>
    <source>
        <tissue>Cervix carcinoma</tissue>
    </source>
</reference>
<reference key="6">
    <citation type="journal article" date="2008" name="Proc. Natl. Acad. Sci. U.S.A.">
        <title>A quantitative atlas of mitotic phosphorylation.</title>
        <authorList>
            <person name="Dephoure N."/>
            <person name="Zhou C."/>
            <person name="Villen J."/>
            <person name="Beausoleil S.A."/>
            <person name="Bakalarski C.E."/>
            <person name="Elledge S.J."/>
            <person name="Gygi S.P."/>
        </authorList>
    </citation>
    <scope>PHOSPHORYLATION [LARGE SCALE ANALYSIS] AT SER-127 AND SER-164</scope>
    <scope>IDENTIFICATION BY MASS SPECTROMETRY [LARGE SCALE ANALYSIS]</scope>
    <source>
        <tissue>Cervix carcinoma</tissue>
    </source>
</reference>
<reference key="7">
    <citation type="journal article" date="2009" name="Sci. Signal.">
        <title>Quantitative phosphoproteomic analysis of T cell receptor signaling reveals system-wide modulation of protein-protein interactions.</title>
        <authorList>
            <person name="Mayya V."/>
            <person name="Lundgren D.H."/>
            <person name="Hwang S.-I."/>
            <person name="Rezaul K."/>
            <person name="Wu L."/>
            <person name="Eng J.K."/>
            <person name="Rodionov V."/>
            <person name="Han D.K."/>
        </authorList>
    </citation>
    <scope>IDENTIFICATION BY MASS SPECTROMETRY [LARGE SCALE ANALYSIS]</scope>
    <source>
        <tissue>Leukemic T-cell</tissue>
    </source>
</reference>
<reference key="8">
    <citation type="journal article" date="2010" name="Sci. Signal.">
        <title>Quantitative phosphoproteomics reveals widespread full phosphorylation site occupancy during mitosis.</title>
        <authorList>
            <person name="Olsen J.V."/>
            <person name="Vermeulen M."/>
            <person name="Santamaria A."/>
            <person name="Kumar C."/>
            <person name="Miller M.L."/>
            <person name="Jensen L.J."/>
            <person name="Gnad F."/>
            <person name="Cox J."/>
            <person name="Jensen T.S."/>
            <person name="Nigg E.A."/>
            <person name="Brunak S."/>
            <person name="Mann M."/>
        </authorList>
    </citation>
    <scope>PHOSPHORYLATION [LARGE SCALE ANALYSIS] AT THR-219</scope>
    <scope>IDENTIFICATION BY MASS SPECTROMETRY [LARGE SCALE ANALYSIS]</scope>
    <source>
        <tissue>Cervix carcinoma</tissue>
    </source>
</reference>
<reference key="9">
    <citation type="journal article" date="2011" name="BMC Syst. Biol.">
        <title>Initial characterization of the human central proteome.</title>
        <authorList>
            <person name="Burkard T.R."/>
            <person name="Planyavsky M."/>
            <person name="Kaupe I."/>
            <person name="Breitwieser F.P."/>
            <person name="Buerckstuemmer T."/>
            <person name="Bennett K.L."/>
            <person name="Superti-Furga G."/>
            <person name="Colinge J."/>
        </authorList>
    </citation>
    <scope>IDENTIFICATION BY MASS SPECTROMETRY [LARGE SCALE ANALYSIS]</scope>
</reference>
<reference key="10">
    <citation type="journal article" date="2011" name="Sci. Signal.">
        <title>System-wide temporal characterization of the proteome and phosphoproteome of human embryonic stem cell differentiation.</title>
        <authorList>
            <person name="Rigbolt K.T."/>
            <person name="Prokhorova T.A."/>
            <person name="Akimov V."/>
            <person name="Henningsen J."/>
            <person name="Johansen P.T."/>
            <person name="Kratchmarova I."/>
            <person name="Kassem M."/>
            <person name="Mann M."/>
            <person name="Olsen J.V."/>
            <person name="Blagoev B."/>
        </authorList>
    </citation>
    <scope>PHOSPHORYLATION [LARGE SCALE ANALYSIS] AT THR-215 AND SER-220</scope>
    <scope>IDENTIFICATION BY MASS SPECTROMETRY [LARGE SCALE ANALYSIS]</scope>
</reference>
<reference key="11">
    <citation type="journal article" date="2013" name="J. Proteome Res.">
        <title>Toward a comprehensive characterization of a human cancer cell phosphoproteome.</title>
        <authorList>
            <person name="Zhou H."/>
            <person name="Di Palma S."/>
            <person name="Preisinger C."/>
            <person name="Peng M."/>
            <person name="Polat A.N."/>
            <person name="Heck A.J."/>
            <person name="Mohammed S."/>
        </authorList>
    </citation>
    <scope>PHOSPHORYLATION [LARGE SCALE ANALYSIS] AT SER-123; SER-127; SER-216; SER-217 AND SER-220</scope>
    <scope>IDENTIFICATION BY MASS SPECTROMETRY [LARGE SCALE ANALYSIS]</scope>
    <source>
        <tissue>Cervix carcinoma</tissue>
        <tissue>Erythroleukemia</tissue>
    </source>
</reference>
<reference key="12">
    <citation type="journal article" date="2015" name="Mol. Cell. Proteomics">
        <title>System-wide analysis of SUMOylation dynamics in response to replication stress reveals novel small ubiquitin-like modified target proteins and acceptor lysines relevant for genome stability.</title>
        <authorList>
            <person name="Xiao Z."/>
            <person name="Chang J.G."/>
            <person name="Hendriks I.A."/>
            <person name="Sigurdsson J.O."/>
            <person name="Olsen J.V."/>
            <person name="Vertegaal A.C."/>
        </authorList>
    </citation>
    <scope>SUMOYLATION [LARGE SCALE ANALYSIS] AT LYS-104</scope>
    <scope>IDENTIFICATION BY MASS SPECTROMETRY [LARGE SCALE ANALYSIS]</scope>
</reference>
<reference key="13">
    <citation type="journal article" date="2017" name="Nat. Struct. Mol. Biol.">
        <title>Site-specific mapping of the human SUMO proteome reveals co-modification with phosphorylation.</title>
        <authorList>
            <person name="Hendriks I.A."/>
            <person name="Lyon D."/>
            <person name="Young C."/>
            <person name="Jensen L.J."/>
            <person name="Vertegaal A.C."/>
            <person name="Nielsen M.L."/>
        </authorList>
    </citation>
    <scope>SUMOYLATION [LARGE SCALE ANALYSIS] AT LYS-22; LYS-104 AND LYS-113</scope>
    <scope>IDENTIFICATION BY MASS SPECTROMETRY [LARGE SCALE ANALYSIS]</scope>
</reference>
<name>MMTA2_HUMAN</name>
<dbReference type="EMBL" id="AY137773">
    <property type="protein sequence ID" value="AAN15215.1"/>
    <property type="molecule type" value="mRNA"/>
</dbReference>
<dbReference type="EMBL" id="AK123377">
    <property type="protein sequence ID" value="BAC85598.1"/>
    <property type="molecule type" value="mRNA"/>
</dbReference>
<dbReference type="EMBL" id="AK126087">
    <property type="protein sequence ID" value="BAC86431.1"/>
    <property type="molecule type" value="mRNA"/>
</dbReference>
<dbReference type="EMBL" id="AL136379">
    <property type="status" value="NOT_ANNOTATED_CDS"/>
    <property type="molecule type" value="Genomic_DNA"/>
</dbReference>
<dbReference type="EMBL" id="BC002843">
    <property type="protein sequence ID" value="AAH02843.1"/>
    <property type="molecule type" value="mRNA"/>
</dbReference>
<dbReference type="EMBL" id="BC062585">
    <property type="protein sequence ID" value="AAH62585.1"/>
    <property type="molecule type" value="mRNA"/>
</dbReference>
<dbReference type="CCDS" id="CCDS1566.1">
    <molecule id="Q9BU76-1"/>
</dbReference>
<dbReference type="RefSeq" id="NP_077295.1">
    <molecule id="Q9BU76-1"/>
    <property type="nucleotide sequence ID" value="NM_024319.3"/>
</dbReference>
<dbReference type="SMR" id="Q9BU76"/>
<dbReference type="BioGRID" id="122586">
    <property type="interactions" value="340"/>
</dbReference>
<dbReference type="FunCoup" id="Q9BU76">
    <property type="interactions" value="935"/>
</dbReference>
<dbReference type="IntAct" id="Q9BU76">
    <property type="interactions" value="199"/>
</dbReference>
<dbReference type="MINT" id="Q9BU76"/>
<dbReference type="STRING" id="9606.ENSP00000272139"/>
<dbReference type="GlyGen" id="Q9BU76">
    <property type="glycosylation" value="1 site, 1 O-linked glycan (1 site)"/>
</dbReference>
<dbReference type="iPTMnet" id="Q9BU76"/>
<dbReference type="PhosphoSitePlus" id="Q9BU76"/>
<dbReference type="BioMuta" id="C1orf35"/>
<dbReference type="DMDM" id="73621220"/>
<dbReference type="jPOST" id="Q9BU76"/>
<dbReference type="MassIVE" id="Q9BU76"/>
<dbReference type="PaxDb" id="9606-ENSP00000272139"/>
<dbReference type="PeptideAtlas" id="Q9BU76"/>
<dbReference type="ProteomicsDB" id="79060">
    <molecule id="Q9BU76-1"/>
</dbReference>
<dbReference type="ProteomicsDB" id="79061">
    <molecule id="Q9BU76-2"/>
</dbReference>
<dbReference type="ProteomicsDB" id="79062">
    <molecule id="Q9BU76-3"/>
</dbReference>
<dbReference type="ProteomicsDB" id="79063">
    <molecule id="Q9BU76-4"/>
</dbReference>
<dbReference type="Pumba" id="Q9BU76"/>
<dbReference type="Antibodypedia" id="52229">
    <property type="antibodies" value="62 antibodies from 20 providers"/>
</dbReference>
<dbReference type="DNASU" id="79169"/>
<dbReference type="Ensembl" id="ENST00000272139.5">
    <molecule id="Q9BU76-1"/>
    <property type="protein sequence ID" value="ENSP00000272139.4"/>
    <property type="gene ID" value="ENSG00000143793.13"/>
</dbReference>
<dbReference type="GeneID" id="79169"/>
<dbReference type="KEGG" id="hsa:79169"/>
<dbReference type="MANE-Select" id="ENST00000272139.5">
    <property type="protein sequence ID" value="ENSP00000272139.4"/>
    <property type="RefSeq nucleotide sequence ID" value="NM_024319.4"/>
    <property type="RefSeq protein sequence ID" value="NP_077295.1"/>
</dbReference>
<dbReference type="UCSC" id="uc001hrx.4">
    <molecule id="Q9BU76-1"/>
    <property type="organism name" value="human"/>
</dbReference>
<dbReference type="AGR" id="HGNC:19032"/>
<dbReference type="CTD" id="79169"/>
<dbReference type="DisGeNET" id="79169"/>
<dbReference type="GeneCards" id="C1orf35"/>
<dbReference type="HGNC" id="HGNC:19032">
    <property type="gene designation" value="C1orf35"/>
</dbReference>
<dbReference type="HPA" id="ENSG00000143793">
    <property type="expression patterns" value="Low tissue specificity"/>
</dbReference>
<dbReference type="neXtProt" id="NX_Q9BU76"/>
<dbReference type="OpenTargets" id="ENSG00000143793"/>
<dbReference type="PharmGKB" id="PA38781"/>
<dbReference type="VEuPathDB" id="HostDB:ENSG00000143793"/>
<dbReference type="eggNOG" id="KOG4520">
    <property type="taxonomic scope" value="Eukaryota"/>
</dbReference>
<dbReference type="GeneTree" id="ENSGT00390000005590"/>
<dbReference type="HOGENOM" id="CLU_061193_0_1_1"/>
<dbReference type="InParanoid" id="Q9BU76"/>
<dbReference type="OMA" id="THHRVDR"/>
<dbReference type="OrthoDB" id="5390672at2759"/>
<dbReference type="PAN-GO" id="Q9BU76">
    <property type="GO annotations" value="0 GO annotations based on evolutionary models"/>
</dbReference>
<dbReference type="PhylomeDB" id="Q9BU76"/>
<dbReference type="TreeFam" id="TF332234"/>
<dbReference type="PathwayCommons" id="Q9BU76"/>
<dbReference type="Reactome" id="R-HSA-6798695">
    <property type="pathway name" value="Neutrophil degranulation"/>
</dbReference>
<dbReference type="SignaLink" id="Q9BU76"/>
<dbReference type="BioGRID-ORCS" id="79169">
    <property type="hits" value="10 hits in 1041 CRISPR screens"/>
</dbReference>
<dbReference type="CD-CODE" id="91857CE7">
    <property type="entry name" value="Nucleolus"/>
</dbReference>
<dbReference type="ChiTaRS" id="C1orf35">
    <property type="organism name" value="human"/>
</dbReference>
<dbReference type="GenomeRNAi" id="79169"/>
<dbReference type="Pharos" id="Q9BU76">
    <property type="development level" value="Tdark"/>
</dbReference>
<dbReference type="PRO" id="PR:Q9BU76"/>
<dbReference type="Proteomes" id="UP000005640">
    <property type="component" value="Chromosome 1"/>
</dbReference>
<dbReference type="RNAct" id="Q9BU76">
    <property type="molecule type" value="protein"/>
</dbReference>
<dbReference type="Bgee" id="ENSG00000143793">
    <property type="expression patterns" value="Expressed in sural nerve and 181 other cell types or tissues"/>
</dbReference>
<dbReference type="GO" id="GO:0005576">
    <property type="term" value="C:extracellular region"/>
    <property type="evidence" value="ECO:0000304"/>
    <property type="project" value="Reactome"/>
</dbReference>
<dbReference type="GO" id="GO:1904813">
    <property type="term" value="C:ficolin-1-rich granule lumen"/>
    <property type="evidence" value="ECO:0000304"/>
    <property type="project" value="Reactome"/>
</dbReference>
<dbReference type="GO" id="GO:0034774">
    <property type="term" value="C:secretory granule lumen"/>
    <property type="evidence" value="ECO:0000304"/>
    <property type="project" value="Reactome"/>
</dbReference>
<dbReference type="GO" id="GO:0003723">
    <property type="term" value="F:RNA binding"/>
    <property type="evidence" value="ECO:0007005"/>
    <property type="project" value="UniProtKB"/>
</dbReference>
<dbReference type="InterPro" id="IPR019315">
    <property type="entry name" value="MMTA2_N"/>
</dbReference>
<dbReference type="InterPro" id="IPR039207">
    <property type="entry name" value="MMTAG2-like"/>
</dbReference>
<dbReference type="PANTHER" id="PTHR14580:SF0">
    <property type="entry name" value="MULTIPLE MYELOMA TUMOR-ASSOCIATED PROTEIN 2"/>
    <property type="match status" value="1"/>
</dbReference>
<dbReference type="PANTHER" id="PTHR14580">
    <property type="entry name" value="MULTIPLE MYELOMA TUMOR-ASSOCIATED PROTEIN 2 FAMILY MEMBER"/>
    <property type="match status" value="1"/>
</dbReference>
<dbReference type="Pfam" id="PF10159">
    <property type="entry name" value="MMtag"/>
    <property type="match status" value="1"/>
</dbReference>
<comment type="interaction">
    <interactant intactId="EBI-742459">
        <id>Q9BU76</id>
    </interactant>
    <interactant intactId="EBI-297683">
        <id>Q96CW1</id>
        <label>AP2M1</label>
    </interactant>
    <organismsDiffer>false</organismsDiffer>
    <experiments>3</experiments>
</comment>
<comment type="interaction">
    <interactant intactId="EBI-742459">
        <id>Q9BU76</id>
    </interactant>
    <interactant intactId="EBI-12248874">
        <id>A0A0C4DG62</id>
        <label>ARL6IP4</label>
    </interactant>
    <organismsDiffer>false</organismsDiffer>
    <experiments>3</experiments>
</comment>
<comment type="interaction">
    <interactant intactId="EBI-742459">
        <id>Q9BU76</id>
    </interactant>
    <interactant intactId="EBI-2836773">
        <id>Q9UK58</id>
        <label>CCNL1</label>
    </interactant>
    <organismsDiffer>false</organismsDiffer>
    <experiments>3</experiments>
</comment>
<comment type="interaction">
    <interactant intactId="EBI-742459">
        <id>Q9BU76</id>
    </interactant>
    <interactant intactId="EBI-739624">
        <id>Q8NHQ1</id>
        <label>CEP70</label>
    </interactant>
    <organismsDiffer>false</organismsDiffer>
    <experiments>5</experiments>
</comment>
<comment type="interaction">
    <interactant intactId="EBI-742459">
        <id>Q9BU76</id>
    </interactant>
    <interactant intactId="EBI-347804">
        <id>P68400</id>
        <label>CSNK2A1</label>
    </interactant>
    <organismsDiffer>false</organismsDiffer>
    <experiments>4</experiments>
</comment>
<comment type="interaction">
    <interactant intactId="EBI-742459">
        <id>Q9BU76</id>
    </interactant>
    <interactant intactId="EBI-12051833">
        <id>Q5HYN5</id>
        <label>CT45A1</label>
    </interactant>
    <organismsDiffer>false</organismsDiffer>
    <experiments>3</experiments>
</comment>
<comment type="interaction">
    <interactant intactId="EBI-742459">
        <id>Q9BU76</id>
    </interactant>
    <interactant intactId="EBI-10186082">
        <id>Q9UI36-2</id>
        <label>DACH1</label>
    </interactant>
    <organismsDiffer>false</organismsDiffer>
    <experiments>3</experiments>
</comment>
<comment type="interaction">
    <interactant intactId="EBI-742459">
        <id>Q9BU76</id>
    </interactant>
    <interactant intactId="EBI-739789">
        <id>Q92997</id>
        <label>DVL3</label>
    </interactant>
    <organismsDiffer>false</organismsDiffer>
    <experiments>3</experiments>
</comment>
<comment type="interaction">
    <interactant intactId="EBI-742459">
        <id>Q9BU76</id>
    </interactant>
    <interactant intactId="EBI-10268158">
        <id>Q8N9E0</id>
        <label>FAM133A</label>
    </interactant>
    <organismsDiffer>false</organismsDiffer>
    <experiments>3</experiments>
</comment>
<comment type="interaction">
    <interactant intactId="EBI-742459">
        <id>Q9BU76</id>
    </interactant>
    <interactant intactId="EBI-11022345">
        <id>P51114-2</id>
        <label>FXR1</label>
    </interactant>
    <organismsDiffer>false</organismsDiffer>
    <experiments>5</experiments>
</comment>
<comment type="interaction">
    <interactant intactId="EBI-742459">
        <id>Q9BU76</id>
    </interactant>
    <interactant intactId="EBI-740459">
        <id>P51116</id>
        <label>FXR2</label>
    </interactant>
    <organismsDiffer>false</organismsDiffer>
    <experiments>6</experiments>
</comment>
<comment type="interaction">
    <interactant intactId="EBI-742459">
        <id>Q9BU76</id>
    </interactant>
    <interactant intactId="EBI-1052570">
        <id>O95995</id>
        <label>GAS8</label>
    </interactant>
    <organismsDiffer>false</organismsDiffer>
    <experiments>3</experiments>
</comment>
<comment type="interaction">
    <interactant intactId="EBI-742459">
        <id>Q9BU76</id>
    </interactant>
    <interactant intactId="EBI-743722">
        <id>Q5VSY0</id>
        <label>GKAP1</label>
    </interactant>
    <organismsDiffer>false</organismsDiffer>
    <experiments>3</experiments>
</comment>
<comment type="interaction">
    <interactant intactId="EBI-742459">
        <id>Q9BU76</id>
    </interactant>
    <interactant intactId="EBI-618309">
        <id>Q08379</id>
        <label>GOLGA2</label>
    </interactant>
    <organismsDiffer>false</organismsDiffer>
    <experiments>4</experiments>
</comment>
<comment type="interaction">
    <interactant intactId="EBI-742459">
        <id>Q9BU76</id>
    </interactant>
    <interactant intactId="EBI-5916454">
        <id>A6NEM1</id>
        <label>GOLGA6L9</label>
    </interactant>
    <organismsDiffer>false</organismsDiffer>
    <experiments>3</experiments>
</comment>
<comment type="interaction">
    <interactant intactId="EBI-742459">
        <id>Q9BU76</id>
    </interactant>
    <interactant intactId="EBI-7116203">
        <id>O75031</id>
        <label>HSF2BP</label>
    </interactant>
    <organismsDiffer>false</organismsDiffer>
    <experiments>3</experiments>
</comment>
<comment type="interaction">
    <interactant intactId="EBI-742459">
        <id>Q9BU76</id>
    </interactant>
    <interactant intactId="EBI-6509505">
        <id>Q0VD86</id>
        <label>INCA1</label>
    </interactant>
    <organismsDiffer>false</organismsDiffer>
    <experiments>3</experiments>
</comment>
<comment type="interaction">
    <interactant intactId="EBI-742459">
        <id>Q9BU76</id>
    </interactant>
    <interactant intactId="EBI-10172526">
        <id>Q9UJV3-2</id>
        <label>MID2</label>
    </interactant>
    <organismsDiffer>false</organismsDiffer>
    <experiments>3</experiments>
</comment>
<comment type="interaction">
    <interactant intactId="EBI-742459">
        <id>Q9BU76</id>
    </interactant>
    <interactant intactId="EBI-2548751">
        <id>Q8TD10</id>
        <label>MIPOL1</label>
    </interactant>
    <organismsDiffer>false</organismsDiffer>
    <experiments>3</experiments>
</comment>
<comment type="interaction">
    <interactant intactId="EBI-742459">
        <id>Q9BU76</id>
    </interactant>
    <interactant intactId="EBI-11522433">
        <id>Q5JR59-3</id>
        <label>MTUS2</label>
    </interactant>
    <organismsDiffer>false</organismsDiffer>
    <experiments>3</experiments>
</comment>
<comment type="interaction">
    <interactant intactId="EBI-742459">
        <id>Q9BU76</id>
    </interactant>
    <interactant intactId="EBI-3920396">
        <id>Q6ZUT1</id>
        <label>NKAPD1</label>
    </interactant>
    <organismsDiffer>false</organismsDiffer>
    <experiments>3</experiments>
</comment>
<comment type="interaction">
    <interactant intactId="EBI-742459">
        <id>Q9BU76</id>
    </interactant>
    <interactant intactId="EBI-79165">
        <id>Q9NRD5</id>
        <label>PICK1</label>
    </interactant>
    <organismsDiffer>false</organismsDiffer>
    <experiments>3</experiments>
</comment>
<comment type="interaction">
    <interactant intactId="EBI-742459">
        <id>Q9BU76</id>
    </interactant>
    <interactant intactId="EBI-742388">
        <id>Q9H8W4</id>
        <label>PLEKHF2</label>
    </interactant>
    <organismsDiffer>false</organismsDiffer>
    <experiments>3</experiments>
</comment>
<comment type="interaction">
    <interactant intactId="EBI-742459">
        <id>Q9BU76</id>
    </interactant>
    <interactant intactId="EBI-7704044">
        <id>Q9Y388</id>
        <label>RBMX2</label>
    </interactant>
    <organismsDiffer>false</organismsDiffer>
    <experiments>3</experiments>
</comment>
<comment type="interaction">
    <interactant intactId="EBI-742459">
        <id>Q9BU76</id>
    </interactant>
    <interactant intactId="EBI-726876">
        <id>Q6NUQ1</id>
        <label>RINT1</label>
    </interactant>
    <organismsDiffer>false</organismsDiffer>
    <experiments>3</experiments>
</comment>
<comment type="interaction">
    <interactant intactId="EBI-742459">
        <id>Q9BU76</id>
    </interactant>
    <interactant intactId="EBI-12002474">
        <id>Q2KHN1</id>
        <label>RNF151</label>
    </interactant>
    <organismsDiffer>false</organismsDiffer>
    <experiments>3</experiments>
</comment>
<comment type="interaction">
    <interactant intactId="EBI-742459">
        <id>Q9BU76</id>
    </interactant>
    <interactant intactId="EBI-630339">
        <id>Q8TA86</id>
        <label>RP9</label>
    </interactant>
    <organismsDiffer>false</organismsDiffer>
    <experiments>3</experiments>
</comment>
<comment type="interaction">
    <interactant intactId="EBI-742459">
        <id>Q9BU76</id>
    </interactant>
    <interactant intactId="EBI-727004">
        <id>O00560</id>
        <label>SDCBP</label>
    </interactant>
    <organismsDiffer>false</organismsDiffer>
    <experiments>3</experiments>
</comment>
<comment type="interaction">
    <interactant intactId="EBI-742459">
        <id>Q9BU76</id>
    </interactant>
    <interactant intactId="EBI-742426">
        <id>Q9H190</id>
        <label>SDCBP2</label>
    </interactant>
    <organismsDiffer>false</organismsDiffer>
    <experiments>4</experiments>
</comment>
<comment type="interaction">
    <interactant intactId="EBI-742459">
        <id>Q9BU76</id>
    </interactant>
    <interactant intactId="EBI-12020542">
        <id>Q96LM5</id>
        <label>SPMIP2</label>
    </interactant>
    <organismsDiffer>false</organismsDiffer>
    <experiments>3</experiments>
</comment>
<comment type="interaction">
    <interactant intactId="EBI-742459">
        <id>Q9BU76</id>
    </interactant>
    <interactant intactId="EBI-593303">
        <id>P78362</id>
        <label>SRPK2</label>
    </interactant>
    <organismsDiffer>false</organismsDiffer>
    <experiments>3</experiments>
</comment>
<comment type="interaction">
    <interactant intactId="EBI-742459">
        <id>Q9BU76</id>
    </interactant>
    <interactant intactId="EBI-3867173">
        <id>A7MD48</id>
        <label>SRRM4</label>
    </interactant>
    <organismsDiffer>false</organismsDiffer>
    <experiments>3</experiments>
</comment>
<comment type="interaction">
    <interactant intactId="EBI-742459">
        <id>Q9BU76</id>
    </interactant>
    <interactant intactId="EBI-745680">
        <id>Q96MF2</id>
        <label>STAC3</label>
    </interactant>
    <organismsDiffer>false</organismsDiffer>
    <experiments>5</experiments>
</comment>
<comment type="interaction">
    <interactant intactId="EBI-742459">
        <id>Q9BU76</id>
    </interactant>
    <interactant intactId="EBI-710997">
        <id>P54274</id>
        <label>TERF1</label>
    </interactant>
    <organismsDiffer>false</organismsDiffer>
    <experiments>2</experiments>
</comment>
<comment type="interaction">
    <interactant intactId="EBI-742459">
        <id>Q9BU76</id>
    </interactant>
    <interactant intactId="EBI-741515">
        <id>Q9NVV9</id>
        <label>THAP1</label>
    </interactant>
    <organismsDiffer>false</organismsDiffer>
    <experiments>9</experiments>
</comment>
<comment type="interaction">
    <interactant intactId="EBI-742459">
        <id>Q9BU76</id>
    </interactant>
    <interactant intactId="EBI-2130429">
        <id>Q9BYV2</id>
        <label>TRIM54</label>
    </interactant>
    <organismsDiffer>false</organismsDiffer>
    <experiments>3</experiments>
</comment>
<comment type="interaction">
    <interactant intactId="EBI-742459">
        <id>Q9BU76</id>
    </interactant>
    <interactant intactId="EBI-527853">
        <id>Q9UGI0</id>
        <label>ZRANB1</label>
    </interactant>
    <organismsDiffer>false</organismsDiffer>
    <experiments>3</experiments>
</comment>
<comment type="alternative products">
    <event type="alternative splicing"/>
    <isoform>
        <id>Q9BU76-1</id>
        <name>1</name>
        <sequence type="displayed"/>
    </isoform>
    <isoform>
        <id>Q9BU76-2</id>
        <name>2</name>
        <sequence type="described" ref="VSP_015129 VSP_015130"/>
    </isoform>
    <isoform>
        <id>Q9BU76-3</id>
        <name>3</name>
        <sequence type="described" ref="VSP_015131 VSP_015132"/>
    </isoform>
    <isoform>
        <id>Q9BU76-4</id>
        <name>4</name>
        <sequence type="described" ref="VSP_015133 VSP_015134"/>
    </isoform>
</comment>
<keyword id="KW-0025">Alternative splicing</keyword>
<keyword id="KW-1017">Isopeptide bond</keyword>
<keyword id="KW-0597">Phosphoprotein</keyword>
<keyword id="KW-1267">Proteomics identification</keyword>
<keyword id="KW-1185">Reference proteome</keyword>
<keyword id="KW-0832">Ubl conjugation</keyword>
<feature type="chain" id="PRO_0000096518" description="Multiple myeloma tumor-associated protein 2">
    <location>
        <begin position="1"/>
        <end position="263"/>
    </location>
</feature>
<feature type="region of interest" description="Disordered" evidence="1">
    <location>
        <begin position="1"/>
        <end position="21"/>
    </location>
</feature>
<feature type="region of interest" description="Disordered" evidence="1">
    <location>
        <begin position="105"/>
        <end position="132"/>
    </location>
</feature>
<feature type="region of interest" description="Disordered" evidence="1">
    <location>
        <begin position="148"/>
        <end position="263"/>
    </location>
</feature>
<feature type="compositionally biased region" description="Gly residues" evidence="1">
    <location>
        <begin position="1"/>
        <end position="11"/>
    </location>
</feature>
<feature type="compositionally biased region" description="Basic and acidic residues" evidence="1">
    <location>
        <begin position="105"/>
        <end position="116"/>
    </location>
</feature>
<feature type="compositionally biased region" description="Low complexity" evidence="1">
    <location>
        <begin position="117"/>
        <end position="132"/>
    </location>
</feature>
<feature type="compositionally biased region" description="Basic residues" evidence="1">
    <location>
        <begin position="183"/>
        <end position="209"/>
    </location>
</feature>
<feature type="modified residue" description="Phosphoserine" evidence="8">
    <location>
        <position position="123"/>
    </location>
</feature>
<feature type="modified residue" description="Phosphoserine" evidence="5 8">
    <location>
        <position position="127"/>
    </location>
</feature>
<feature type="modified residue" description="Phosphoserine" evidence="5">
    <location>
        <position position="164"/>
    </location>
</feature>
<feature type="modified residue" description="Phosphothreonine" evidence="7">
    <location>
        <position position="215"/>
    </location>
</feature>
<feature type="modified residue" description="Phosphoserine" evidence="8">
    <location>
        <position position="216"/>
    </location>
</feature>
<feature type="modified residue" description="Phosphoserine" evidence="8">
    <location>
        <position position="217"/>
    </location>
</feature>
<feature type="modified residue" description="Phosphothreonine" evidence="6">
    <location>
        <position position="219"/>
    </location>
</feature>
<feature type="modified residue" description="Phosphoserine" evidence="7 8">
    <location>
        <position position="220"/>
    </location>
</feature>
<feature type="cross-link" description="Glycyl lysine isopeptide (Lys-Gly) (interchain with G-Cter in SUMO2)" evidence="10">
    <location>
        <position position="22"/>
    </location>
</feature>
<feature type="cross-link" description="Glycyl lysine isopeptide (Lys-Gly) (interchain with G-Cter in SUMO2)" evidence="9 10">
    <location>
        <position position="104"/>
    </location>
</feature>
<feature type="cross-link" description="Glycyl lysine isopeptide (Lys-Gly) (interchain with G-Cter in SUMO2)" evidence="10">
    <location>
        <position position="113"/>
    </location>
</feature>
<feature type="splice variant" id="VSP_015129" description="In isoform 2." evidence="2">
    <original>SGSVGRVAMSREDKEAA</original>
    <variation>RCGRVSRGGQHWARLLG</variation>
    <location>
        <begin position="125"/>
        <end position="141"/>
    </location>
</feature>
<feature type="splice variant" id="VSP_015130" description="In isoform 2." evidence="2">
    <location>
        <begin position="142"/>
        <end position="263"/>
    </location>
</feature>
<feature type="splice variant" id="VSP_015131" description="In isoform 3." evidence="3">
    <original>HHRVES</original>
    <variation>VIPRPA</variation>
    <location>
        <begin position="150"/>
        <end position="155"/>
    </location>
</feature>
<feature type="splice variant" id="VSP_015132" description="In isoform 3." evidence="3">
    <location>
        <begin position="156"/>
        <end position="263"/>
    </location>
</feature>
<feature type="splice variant" id="VSP_015133" description="In isoform 4." evidence="2">
    <original>SCESHRKSKKEK</original>
    <variation>RGVSRVTLEERS</variation>
    <location>
        <begin position="178"/>
        <end position="189"/>
    </location>
</feature>
<feature type="splice variant" id="VSP_015134" description="In isoform 4." evidence="2">
    <location>
        <begin position="190"/>
        <end position="263"/>
    </location>
</feature>
<feature type="sequence conflict" description="In Ref. 1; AAN15215." evidence="4" ref="1">
    <original>N</original>
    <variation>I</variation>
    <location>
        <position position="29"/>
    </location>
</feature>
<feature type="sequence conflict" description="In Ref. 1; AAN15215." evidence="4" ref="1">
    <original>E</original>
    <variation>K</variation>
    <location>
        <position position="154"/>
    </location>
</feature>
<feature type="sequence conflict" description="In Ref. 1; AAN15215." evidence="4" ref="1">
    <original>E</original>
    <variation>K</variation>
    <location>
        <position position="262"/>
    </location>
</feature>